<dbReference type="EC" id="3.6.5.3" evidence="2"/>
<dbReference type="EMBL" id="AB017508">
    <property type="protein sequence ID" value="BAA75269.1"/>
    <property type="molecule type" value="Genomic_DNA"/>
</dbReference>
<dbReference type="EMBL" id="BA000004">
    <property type="protein sequence ID" value="BAB03851.1"/>
    <property type="molecule type" value="Genomic_DNA"/>
</dbReference>
<dbReference type="PIR" id="T44381">
    <property type="entry name" value="T44381"/>
</dbReference>
<dbReference type="RefSeq" id="WP_010896315.1">
    <property type="nucleotide sequence ID" value="NC_002570.2"/>
</dbReference>
<dbReference type="SMR" id="Q9Z9L6"/>
<dbReference type="STRING" id="272558.gene:10725972"/>
<dbReference type="GeneID" id="87595673"/>
<dbReference type="KEGG" id="bha:BH0132"/>
<dbReference type="eggNOG" id="COG0050">
    <property type="taxonomic scope" value="Bacteria"/>
</dbReference>
<dbReference type="HOGENOM" id="CLU_007265_0_1_9"/>
<dbReference type="OrthoDB" id="9804504at2"/>
<dbReference type="Proteomes" id="UP000001258">
    <property type="component" value="Chromosome"/>
</dbReference>
<dbReference type="GO" id="GO:0005829">
    <property type="term" value="C:cytosol"/>
    <property type="evidence" value="ECO:0007669"/>
    <property type="project" value="TreeGrafter"/>
</dbReference>
<dbReference type="GO" id="GO:0005525">
    <property type="term" value="F:GTP binding"/>
    <property type="evidence" value="ECO:0007669"/>
    <property type="project" value="UniProtKB-UniRule"/>
</dbReference>
<dbReference type="GO" id="GO:0003924">
    <property type="term" value="F:GTPase activity"/>
    <property type="evidence" value="ECO:0007669"/>
    <property type="project" value="InterPro"/>
</dbReference>
<dbReference type="GO" id="GO:0003746">
    <property type="term" value="F:translation elongation factor activity"/>
    <property type="evidence" value="ECO:0007669"/>
    <property type="project" value="UniProtKB-UniRule"/>
</dbReference>
<dbReference type="CDD" id="cd01884">
    <property type="entry name" value="EF_Tu"/>
    <property type="match status" value="1"/>
</dbReference>
<dbReference type="CDD" id="cd03697">
    <property type="entry name" value="EFTU_II"/>
    <property type="match status" value="1"/>
</dbReference>
<dbReference type="CDD" id="cd03707">
    <property type="entry name" value="EFTU_III"/>
    <property type="match status" value="1"/>
</dbReference>
<dbReference type="FunFam" id="2.40.30.10:FF:000001">
    <property type="entry name" value="Elongation factor Tu"/>
    <property type="match status" value="1"/>
</dbReference>
<dbReference type="FunFam" id="3.40.50.300:FF:000003">
    <property type="entry name" value="Elongation factor Tu"/>
    <property type="match status" value="1"/>
</dbReference>
<dbReference type="Gene3D" id="3.40.50.300">
    <property type="entry name" value="P-loop containing nucleotide triphosphate hydrolases"/>
    <property type="match status" value="1"/>
</dbReference>
<dbReference type="Gene3D" id="2.40.30.10">
    <property type="entry name" value="Translation factors"/>
    <property type="match status" value="2"/>
</dbReference>
<dbReference type="HAMAP" id="MF_00118_B">
    <property type="entry name" value="EF_Tu_B"/>
    <property type="match status" value="1"/>
</dbReference>
<dbReference type="InterPro" id="IPR041709">
    <property type="entry name" value="EF-Tu_GTP-bd"/>
</dbReference>
<dbReference type="InterPro" id="IPR050055">
    <property type="entry name" value="EF-Tu_GTPase"/>
</dbReference>
<dbReference type="InterPro" id="IPR004161">
    <property type="entry name" value="EFTu-like_2"/>
</dbReference>
<dbReference type="InterPro" id="IPR033720">
    <property type="entry name" value="EFTU_2"/>
</dbReference>
<dbReference type="InterPro" id="IPR031157">
    <property type="entry name" value="G_TR_CS"/>
</dbReference>
<dbReference type="InterPro" id="IPR027417">
    <property type="entry name" value="P-loop_NTPase"/>
</dbReference>
<dbReference type="InterPro" id="IPR005225">
    <property type="entry name" value="Small_GTP-bd"/>
</dbReference>
<dbReference type="InterPro" id="IPR000795">
    <property type="entry name" value="T_Tr_GTP-bd_dom"/>
</dbReference>
<dbReference type="InterPro" id="IPR009000">
    <property type="entry name" value="Transl_B-barrel_sf"/>
</dbReference>
<dbReference type="InterPro" id="IPR009001">
    <property type="entry name" value="Transl_elong_EF1A/Init_IF2_C"/>
</dbReference>
<dbReference type="InterPro" id="IPR004541">
    <property type="entry name" value="Transl_elong_EFTu/EF1A_bac/org"/>
</dbReference>
<dbReference type="InterPro" id="IPR004160">
    <property type="entry name" value="Transl_elong_EFTu/EF1A_C"/>
</dbReference>
<dbReference type="NCBIfam" id="TIGR00485">
    <property type="entry name" value="EF-Tu"/>
    <property type="match status" value="1"/>
</dbReference>
<dbReference type="NCBIfam" id="NF000766">
    <property type="entry name" value="PRK00049.1"/>
    <property type="match status" value="1"/>
</dbReference>
<dbReference type="NCBIfam" id="NF009372">
    <property type="entry name" value="PRK12735.1"/>
    <property type="match status" value="1"/>
</dbReference>
<dbReference type="NCBIfam" id="NF009373">
    <property type="entry name" value="PRK12736.1"/>
    <property type="match status" value="1"/>
</dbReference>
<dbReference type="NCBIfam" id="TIGR00231">
    <property type="entry name" value="small_GTP"/>
    <property type="match status" value="1"/>
</dbReference>
<dbReference type="PANTHER" id="PTHR43721:SF22">
    <property type="entry name" value="ELONGATION FACTOR TU, MITOCHONDRIAL"/>
    <property type="match status" value="1"/>
</dbReference>
<dbReference type="PANTHER" id="PTHR43721">
    <property type="entry name" value="ELONGATION FACTOR TU-RELATED"/>
    <property type="match status" value="1"/>
</dbReference>
<dbReference type="Pfam" id="PF00009">
    <property type="entry name" value="GTP_EFTU"/>
    <property type="match status" value="1"/>
</dbReference>
<dbReference type="Pfam" id="PF03144">
    <property type="entry name" value="GTP_EFTU_D2"/>
    <property type="match status" value="1"/>
</dbReference>
<dbReference type="Pfam" id="PF03143">
    <property type="entry name" value="GTP_EFTU_D3"/>
    <property type="match status" value="1"/>
</dbReference>
<dbReference type="PRINTS" id="PR00315">
    <property type="entry name" value="ELONGATNFCT"/>
</dbReference>
<dbReference type="SUPFAM" id="SSF50465">
    <property type="entry name" value="EF-Tu/eEF-1alpha/eIF2-gamma C-terminal domain"/>
    <property type="match status" value="1"/>
</dbReference>
<dbReference type="SUPFAM" id="SSF52540">
    <property type="entry name" value="P-loop containing nucleoside triphosphate hydrolases"/>
    <property type="match status" value="1"/>
</dbReference>
<dbReference type="SUPFAM" id="SSF50447">
    <property type="entry name" value="Translation proteins"/>
    <property type="match status" value="1"/>
</dbReference>
<dbReference type="PROSITE" id="PS00301">
    <property type="entry name" value="G_TR_1"/>
    <property type="match status" value="1"/>
</dbReference>
<dbReference type="PROSITE" id="PS51722">
    <property type="entry name" value="G_TR_2"/>
    <property type="match status" value="1"/>
</dbReference>
<gene>
    <name evidence="2" type="primary">tuf</name>
    <name type="synonym">tufA</name>
    <name type="ordered locus">BH0132</name>
</gene>
<organism>
    <name type="scientific">Halalkalibacterium halodurans (strain ATCC BAA-125 / DSM 18197 / FERM 7344 / JCM 9153 / C-125)</name>
    <name type="common">Bacillus halodurans</name>
    <dbReference type="NCBI Taxonomy" id="272558"/>
    <lineage>
        <taxon>Bacteria</taxon>
        <taxon>Bacillati</taxon>
        <taxon>Bacillota</taxon>
        <taxon>Bacilli</taxon>
        <taxon>Bacillales</taxon>
        <taxon>Bacillaceae</taxon>
        <taxon>Halalkalibacterium (ex Joshi et al. 2022)</taxon>
    </lineage>
</organism>
<comment type="function">
    <text evidence="2">GTP hydrolase that promotes the GTP-dependent binding of aminoacyl-tRNA to the A-site of ribosomes during protein biosynthesis.</text>
</comment>
<comment type="catalytic activity">
    <reaction evidence="2">
        <text>GTP + H2O = GDP + phosphate + H(+)</text>
        <dbReference type="Rhea" id="RHEA:19669"/>
        <dbReference type="ChEBI" id="CHEBI:15377"/>
        <dbReference type="ChEBI" id="CHEBI:15378"/>
        <dbReference type="ChEBI" id="CHEBI:37565"/>
        <dbReference type="ChEBI" id="CHEBI:43474"/>
        <dbReference type="ChEBI" id="CHEBI:58189"/>
        <dbReference type="EC" id="3.6.5.3"/>
    </reaction>
    <physiologicalReaction direction="left-to-right" evidence="2">
        <dbReference type="Rhea" id="RHEA:19670"/>
    </physiologicalReaction>
</comment>
<comment type="subunit">
    <text evidence="2">Monomer.</text>
</comment>
<comment type="subcellular location">
    <subcellularLocation>
        <location evidence="2">Cytoplasm</location>
    </subcellularLocation>
</comment>
<comment type="similarity">
    <text evidence="2">Belongs to the TRAFAC class translation factor GTPase superfamily. Classic translation factor GTPase family. EF-Tu/EF-1A subfamily.</text>
</comment>
<accession>Q9Z9L6</accession>
<accession>Q9JPY8</accession>
<evidence type="ECO:0000250" key="1"/>
<evidence type="ECO:0000255" key="2">
    <source>
        <dbReference type="HAMAP-Rule" id="MF_00118"/>
    </source>
</evidence>
<protein>
    <recommendedName>
        <fullName evidence="2">Elongation factor Tu</fullName>
        <shortName evidence="2">EF-Tu</shortName>
        <ecNumber evidence="2">3.6.5.3</ecNumber>
    </recommendedName>
</protein>
<name>EFTU_HALH5</name>
<feature type="chain" id="PRO_0000091289" description="Elongation factor Tu">
    <location>
        <begin position="1"/>
        <end position="396"/>
    </location>
</feature>
<feature type="domain" description="tr-type G">
    <location>
        <begin position="10"/>
        <end position="205"/>
    </location>
</feature>
<feature type="region of interest" description="G1" evidence="1">
    <location>
        <begin position="19"/>
        <end position="26"/>
    </location>
</feature>
<feature type="region of interest" description="G2" evidence="1">
    <location>
        <begin position="61"/>
        <end position="65"/>
    </location>
</feature>
<feature type="region of interest" description="G3" evidence="1">
    <location>
        <begin position="82"/>
        <end position="85"/>
    </location>
</feature>
<feature type="region of interest" description="G4" evidence="1">
    <location>
        <begin position="137"/>
        <end position="140"/>
    </location>
</feature>
<feature type="region of interest" description="G5" evidence="1">
    <location>
        <begin position="175"/>
        <end position="177"/>
    </location>
</feature>
<feature type="binding site" evidence="2">
    <location>
        <begin position="19"/>
        <end position="26"/>
    </location>
    <ligand>
        <name>GTP</name>
        <dbReference type="ChEBI" id="CHEBI:37565"/>
    </ligand>
</feature>
<feature type="binding site" evidence="2">
    <location>
        <position position="26"/>
    </location>
    <ligand>
        <name>Mg(2+)</name>
        <dbReference type="ChEBI" id="CHEBI:18420"/>
    </ligand>
</feature>
<feature type="binding site" evidence="2">
    <location>
        <begin position="82"/>
        <end position="86"/>
    </location>
    <ligand>
        <name>GTP</name>
        <dbReference type="ChEBI" id="CHEBI:37565"/>
    </ligand>
</feature>
<feature type="binding site" evidence="2">
    <location>
        <begin position="137"/>
        <end position="140"/>
    </location>
    <ligand>
        <name>GTP</name>
        <dbReference type="ChEBI" id="CHEBI:37565"/>
    </ligand>
</feature>
<reference key="1">
    <citation type="journal article" date="1999" name="Biosci. Biotechnol. Biochem.">
        <title>Sequence analysis of a 32-kb region including the major ribosomal protein gene clusters from alkaliphilic Bacillus sp. strain C-125.</title>
        <authorList>
            <person name="Takami H."/>
            <person name="Takaki Y."/>
            <person name="Nakasone K."/>
            <person name="Hirama C."/>
            <person name="Inoue A."/>
            <person name="Horikoshi K."/>
        </authorList>
    </citation>
    <scope>NUCLEOTIDE SEQUENCE [GENOMIC DNA]</scope>
    <source>
        <strain>ATCC BAA-125 / DSM 18197 / FERM 7344 / JCM 9153 / C-125</strain>
    </source>
</reference>
<reference key="2">
    <citation type="journal article" date="2000" name="Nucleic Acids Res.">
        <title>Complete genome sequence of the alkaliphilic bacterium Bacillus halodurans and genomic sequence comparison with Bacillus subtilis.</title>
        <authorList>
            <person name="Takami H."/>
            <person name="Nakasone K."/>
            <person name="Takaki Y."/>
            <person name="Maeno G."/>
            <person name="Sasaki R."/>
            <person name="Masui N."/>
            <person name="Fuji F."/>
            <person name="Hirama C."/>
            <person name="Nakamura Y."/>
            <person name="Ogasawara N."/>
            <person name="Kuhara S."/>
            <person name="Horikoshi K."/>
        </authorList>
    </citation>
    <scope>NUCLEOTIDE SEQUENCE [LARGE SCALE GENOMIC DNA]</scope>
    <source>
        <strain>ATCC BAA-125 / DSM 18197 / FERM 7344 / JCM 9153 / C-125</strain>
    </source>
</reference>
<proteinExistence type="inferred from homology"/>
<keyword id="KW-0963">Cytoplasm</keyword>
<keyword id="KW-0251">Elongation factor</keyword>
<keyword id="KW-0342">GTP-binding</keyword>
<keyword id="KW-0378">Hydrolase</keyword>
<keyword id="KW-0460">Magnesium</keyword>
<keyword id="KW-0479">Metal-binding</keyword>
<keyword id="KW-0547">Nucleotide-binding</keyword>
<keyword id="KW-0648">Protein biosynthesis</keyword>
<keyword id="KW-1185">Reference proteome</keyword>
<sequence>MAKEKFDRSKTHANIGTIGHVDHGKTTLTAAITTVLAKRSGKGVAMAYDAIDGAPEERERGITISTAHVEYETDNRHYAHVDCPGHADYVKNMITGAAQMDGGILVVSAADGPMPQTREHILLSRQVGVPYLVVFLNKCDMVDDEELLELVEMEVRDLLSEYDFPGDDVPVIRGSALKALEGDAEWEEKIIELMAAVDDYIPTPERDTEKPFMMPVEDVFSITGRGTVATGRVERGQLNVGDEVEIIGLEEEAKKTTVTGVEMFRKLLDYAEAGDNIGALLRGVSREEVQRGQVLAKPGTITPHTNFKAEVYVLSKEEGGRHTPFFSNYRPQFYFRTTDVTGIIQLPDGVEMVMPGDNVEMTVELIAPIAIEEGTKFSIREGGRTVGAGVVASIQK</sequence>